<gene>
    <name type="primary">MVP</name>
    <name type="synonym">LRP</name>
</gene>
<reference key="1">
    <citation type="journal article" date="1995" name="Nat. Med.">
        <title>The drug resistance-related protein LRP is the human major vault protein.</title>
        <authorList>
            <person name="Scheffer G.L."/>
            <person name="Wijngaard P.L.J."/>
            <person name="Flens M.J."/>
            <person name="Izquierdo M.A."/>
            <person name="Slovak M.L."/>
            <person name="Pinedo H.M."/>
            <person name="Meijer C.J.L.M."/>
            <person name="Clevers H.C."/>
            <person name="Scheper R.J."/>
        </authorList>
    </citation>
    <scope>NUCLEOTIDE SEQUENCE [MRNA]</scope>
</reference>
<reference key="2">
    <citation type="submission" date="2002-03" db="EMBL/GenBank/DDBJ databases">
        <authorList>
            <person name="Scheffer G.L."/>
        </authorList>
    </citation>
    <scope>SEQUENCE REVISION TO C-TERMINUS</scope>
</reference>
<reference key="3">
    <citation type="journal article" date="2004" name="Genome Res.">
        <title>The status, quality, and expansion of the NIH full-length cDNA project: the Mammalian Gene Collection (MGC).</title>
        <authorList>
            <consortium name="The MGC Project Team"/>
        </authorList>
    </citation>
    <scope>NUCLEOTIDE SEQUENCE [LARGE SCALE MRNA]</scope>
    <source>
        <tissue>Eye</tissue>
    </source>
</reference>
<reference key="4">
    <citation type="journal article" date="2000" name="Biochem. Biophys. Res. Commun.">
        <title>Cloning and initial analysis of the human multidrug resistance-related MVP/LRP gene promoter.</title>
        <authorList>
            <person name="Lange C."/>
            <person name="Walther W."/>
            <person name="Schwabe H."/>
            <person name="Stein U."/>
        </authorList>
    </citation>
    <scope>NUCLEOTIDE SEQUENCE [GENOMIC DNA] OF 1-169</scope>
</reference>
<reference key="5">
    <citation type="journal article" date="2001" name="FEBS Lett.">
        <title>A small upstream open reading frame causes inhibition of human major vault protein expression from a ubiquitous mRNA splice variant.</title>
        <authorList>
            <person name="Holzmann K."/>
            <person name="Ambrosch I."/>
            <person name="Elbling L."/>
            <person name="Micksche M."/>
            <person name="Berger W."/>
        </authorList>
    </citation>
    <scope>NUCLEOTIDE SEQUENCE [GENOMIC DNA / MRNA] OF 1-65</scope>
    <source>
        <tissue>Lung cancer</tissue>
    </source>
</reference>
<reference key="6">
    <citation type="submission" date="2005-01" db="UniProtKB">
        <authorList>
            <person name="Quadroni M."/>
            <person name="Potts A."/>
            <person name="Barblan J."/>
            <person name="Bienvenut W.V."/>
        </authorList>
    </citation>
    <scope>PROTEIN SEQUENCE OF 2-9; 68-82 AND 462-474</scope>
    <scope>CLEAVAGE OF INITIATOR METHIONINE</scope>
    <scope>ACETYLATION AT ALA-2</scope>
    <scope>IDENTIFICATION BY MASS SPECTROMETRY</scope>
    <source>
        <tissue>Melanoma</tissue>
    </source>
</reference>
<reference key="7">
    <citation type="journal article" date="1999" name="J. Biol. Chem.">
        <title>Vaults and telomerase share a common subunit, TEP1.</title>
        <authorList>
            <person name="Kickhoefer V.A."/>
            <person name="Stephen A.G."/>
            <person name="Harrington L."/>
            <person name="Robinson M.O."/>
            <person name="Rome L.H."/>
        </authorList>
    </citation>
    <scope>ASSOCIATION WITH TEP1</scope>
</reference>
<reference key="8">
    <citation type="journal article" date="2002" name="J. Biol. Chem.">
        <title>PTEN associates with the vault particles in HeLa cells.</title>
        <authorList>
            <person name="Yu Z."/>
            <person name="Fotouhi-Ardakani N."/>
            <person name="Wu L."/>
            <person name="Maoui M."/>
            <person name="Wang S."/>
            <person name="Banville D."/>
            <person name="Shen S.-H."/>
        </authorList>
    </citation>
    <scope>INTERACTION WITH PTEN</scope>
</reference>
<reference key="9">
    <citation type="journal article" date="2004" name="J. Biol. Chem.">
        <title>The major vault protein is a novel substrate for the tyrosine phosphatase SHP-2 and scaffold protein in epidermal growth factor signaling.</title>
        <authorList>
            <person name="Kolli S."/>
            <person name="Zito C.I."/>
            <person name="Mossink M.H."/>
            <person name="Wiemer E.A.C."/>
            <person name="Bennett A.M."/>
        </authorList>
    </citation>
    <scope>PHOSPHORYLATION AT TYROSINE RESIDUES</scope>
    <scope>IDENTIFICATION BY MASS SPECTROMETRY</scope>
    <scope>INTERACTION WITH PTPN11</scope>
    <scope>SUBCELLULAR LOCATION</scope>
    <scope>FUNCTION</scope>
</reference>
<reference key="10">
    <citation type="journal article" date="2006" name="Biochem. Biophys. Res. Commun.">
        <title>A novel human zinc finger protein ZNF540 interacts with MVP and inhibits transcriptional activities of the ERK signal pathway.</title>
        <authorList>
            <person name="Xiang Z."/>
            <person name="Yuan W."/>
            <person name="Luo N."/>
            <person name="Wang Y."/>
            <person name="Tan K."/>
            <person name="Deng Y."/>
            <person name="Zhou X."/>
            <person name="Zhu C."/>
            <person name="Li Y."/>
            <person name="Liu M."/>
            <person name="Wu X."/>
            <person name="Li Y."/>
        </authorList>
    </citation>
    <scope>INTERACTION WITH ZNF540</scope>
</reference>
<reference key="11">
    <citation type="journal article" date="2006" name="FEBS J.">
        <title>Crosstalk between Src and major vault protein in epidermal growth factor-dependent cell signalling.</title>
        <authorList>
            <person name="Kim E."/>
            <person name="Lee S."/>
            <person name="Mian M.F."/>
            <person name="Yun S.U."/>
            <person name="Song M."/>
            <person name="Yi K.-S."/>
            <person name="Ryu S.H."/>
            <person name="Suh P.-G."/>
        </authorList>
    </citation>
    <scope>FUNCTION</scope>
    <scope>INTERACTION WITH SRC</scope>
    <scope>TYROSINE PHOSPHORYLATION</scope>
    <scope>SUBCELLULAR LOCATION</scope>
    <scope>IDENTIFICATION BY MASS SPECTROMETRY</scope>
</reference>
<reference key="12">
    <citation type="journal article" date="2006" name="J. Cell Sci.">
        <title>The major vault protein is responsive to and interferes with interferon-gamma-mediated STAT1 signals.</title>
        <authorList>
            <person name="Steiner E."/>
            <person name="Holzmann K."/>
            <person name="Pirker C."/>
            <person name="Elbling L."/>
            <person name="Micksche M."/>
            <person name="Sutterluety H."/>
            <person name="Berger W."/>
        </authorList>
    </citation>
    <scope>INDUCTION</scope>
    <scope>FUNCTION</scope>
</reference>
<reference key="13">
    <citation type="journal article" date="2008" name="Mol. Cell. Biol.">
        <title>Regulatory role of human AP-endonuclease (APE1/Ref-1) in YB-1-mediated activation of the multidrug resistance gene MDR1.</title>
        <authorList>
            <person name="Chattopadhyay R."/>
            <person name="Das S."/>
            <person name="Maiti A.K."/>
            <person name="Boldogh I."/>
            <person name="Xie J."/>
            <person name="Hazra T.K."/>
            <person name="Kohno K."/>
            <person name="Mitra S."/>
            <person name="Bhakat K.K."/>
        </authorList>
    </citation>
    <scope>INTERACTION WITH APEX1</scope>
</reference>
<reference key="14">
    <citation type="journal article" date="2008" name="Proc. Natl. Acad. Sci. U.S.A.">
        <title>A quantitative atlas of mitotic phosphorylation.</title>
        <authorList>
            <person name="Dephoure N."/>
            <person name="Zhou C."/>
            <person name="Villen J."/>
            <person name="Beausoleil S.A."/>
            <person name="Bakalarski C.E."/>
            <person name="Elledge S.J."/>
            <person name="Gygi S.P."/>
        </authorList>
    </citation>
    <scope>IDENTIFICATION BY MASS SPECTROMETRY [LARGE SCALE ANALYSIS]</scope>
    <source>
        <tissue>Cervix carcinoma</tissue>
    </source>
</reference>
<reference key="15">
    <citation type="journal article" date="2011" name="BMC Syst. Biol.">
        <title>Initial characterization of the human central proteome.</title>
        <authorList>
            <person name="Burkard T.R."/>
            <person name="Planyavsky M."/>
            <person name="Kaupe I."/>
            <person name="Breitwieser F.P."/>
            <person name="Buerckstuemmer T."/>
            <person name="Bennett K.L."/>
            <person name="Superti-Furga G."/>
            <person name="Colinge J."/>
        </authorList>
    </citation>
    <scope>IDENTIFICATION BY MASS SPECTROMETRY [LARGE SCALE ANALYSIS]</scope>
</reference>
<reference key="16">
    <citation type="journal article" date="2012" name="Mol. Cell. Proteomics">
        <title>Comparative large-scale characterisation of plant vs. mammal proteins reveals similar and idiosyncratic N-alpha acetylation features.</title>
        <authorList>
            <person name="Bienvenut W.V."/>
            <person name="Sumpton D."/>
            <person name="Martinez A."/>
            <person name="Lilla S."/>
            <person name="Espagne C."/>
            <person name="Meinnel T."/>
            <person name="Giglione C."/>
        </authorList>
    </citation>
    <scope>ACETYLATION [LARGE SCALE ANALYSIS] AT ALA-2</scope>
    <scope>CLEAVAGE OF INITIATOR METHIONINE [LARGE SCALE ANALYSIS]</scope>
    <scope>IDENTIFICATION BY MASS SPECTROMETRY [LARGE SCALE ANALYSIS]</scope>
</reference>
<reference key="17">
    <citation type="journal article" date="2012" name="Proc. Natl. Acad. Sci. U.S.A.">
        <title>N-terminal acetylome analyses and functional insights of the N-terminal acetyltransferase NatB.</title>
        <authorList>
            <person name="Van Damme P."/>
            <person name="Lasa M."/>
            <person name="Polevoda B."/>
            <person name="Gazquez C."/>
            <person name="Elosegui-Artola A."/>
            <person name="Kim D.S."/>
            <person name="De Juan-Pardo E."/>
            <person name="Demeyer K."/>
            <person name="Hole K."/>
            <person name="Larrea E."/>
            <person name="Timmerman E."/>
            <person name="Prieto J."/>
            <person name="Arnesen T."/>
            <person name="Sherman F."/>
            <person name="Gevaert K."/>
            <person name="Aldabe R."/>
        </authorList>
    </citation>
    <scope>ACETYLATION [LARGE SCALE ANALYSIS] AT ALA-2</scope>
    <scope>CLEAVAGE OF INITIATOR METHIONINE [LARGE SCALE ANALYSIS]</scope>
    <scope>IDENTIFICATION BY MASS SPECTROMETRY [LARGE SCALE ANALYSIS]</scope>
</reference>
<reference key="18">
    <citation type="journal article" date="2014" name="J. Proteomics">
        <title>An enzyme assisted RP-RPLC approach for in-depth analysis of human liver phosphoproteome.</title>
        <authorList>
            <person name="Bian Y."/>
            <person name="Song C."/>
            <person name="Cheng K."/>
            <person name="Dong M."/>
            <person name="Wang F."/>
            <person name="Huang J."/>
            <person name="Sun D."/>
            <person name="Wang L."/>
            <person name="Ye M."/>
            <person name="Zou H."/>
        </authorList>
    </citation>
    <scope>PHOSPHORYLATION [LARGE SCALE ANALYSIS] AT SER-445</scope>
    <scope>IDENTIFICATION BY MASS SPECTROMETRY [LARGE SCALE ANALYSIS]</scope>
    <source>
        <tissue>Liver</tissue>
    </source>
</reference>
<reference key="19">
    <citation type="journal article" date="2015" name="Mol. Cell. Proteomics">
        <title>System-wide analysis of SUMOylation dynamics in response to replication stress reveals novel small ubiquitin-like modified target proteins and acceptor lysines relevant for genome stability.</title>
        <authorList>
            <person name="Xiao Z."/>
            <person name="Chang J.G."/>
            <person name="Hendriks I.A."/>
            <person name="Sigurdsson J.O."/>
            <person name="Olsen J.V."/>
            <person name="Vertegaal A.C."/>
        </authorList>
    </citation>
    <scope>SUMOYLATION [LARGE SCALE ANALYSIS] AT LYS-444</scope>
    <scope>IDENTIFICATION BY MASS SPECTROMETRY [LARGE SCALE ANALYSIS]</scope>
</reference>
<reference key="20">
    <citation type="journal article" date="2017" name="Nat. Struct. Mol. Biol.">
        <title>Site-specific mapping of the human SUMO proteome reveals co-modification with phosphorylation.</title>
        <authorList>
            <person name="Hendriks I.A."/>
            <person name="Lyon D."/>
            <person name="Young C."/>
            <person name="Jensen L.J."/>
            <person name="Vertegaal A.C."/>
            <person name="Nielsen M.L."/>
        </authorList>
    </citation>
    <scope>SUMOYLATION [LARGE SCALE ANALYSIS] AT LYS-444 AND LYS-704</scope>
    <scope>IDENTIFICATION BY MASS SPECTROMETRY [LARGE SCALE ANALYSIS]</scope>
</reference>
<reference key="21">
    <citation type="journal article" date="2006" name="J. Mol. Biol.">
        <title>Solution structure of a two-repeat fragment of major vault protein.</title>
        <authorList>
            <person name="Kozlov G."/>
            <person name="Vavelyuk O."/>
            <person name="Minailiuc O."/>
            <person name="Banville D."/>
            <person name="Gehring K."/>
            <person name="Ekiel I."/>
        </authorList>
    </citation>
    <scope>STRUCTURE BY NMR OF 113-221</scope>
    <scope>INTERACTION WITH PARP4</scope>
</reference>
<reference key="22">
    <citation type="journal article" date="2018" name="Cerebellum">
        <title>Novel de novo KCND3 mutation in a Japanese patient with intellectual disability, cerebellar ataxia, myoclonus, and dystonia.</title>
        <authorList>
            <person name="Kurihara M."/>
            <person name="Ishiura H."/>
            <person name="Sasaki T."/>
            <person name="Otsuka J."/>
            <person name="Hayashi T."/>
            <person name="Terao Y."/>
            <person name="Matsukawa T."/>
            <person name="Mitsui J."/>
            <person name="Kaneko J."/>
            <person name="Nishiyama K."/>
            <person name="Doi K."/>
            <person name="Yoshimura J."/>
            <person name="Morishita S."/>
            <person name="Shimizu J."/>
            <person name="Tsuji S."/>
        </authorList>
    </citation>
    <scope>VARIANT GLU-87</scope>
</reference>
<organism>
    <name type="scientific">Homo sapiens</name>
    <name type="common">Human</name>
    <dbReference type="NCBI Taxonomy" id="9606"/>
    <lineage>
        <taxon>Eukaryota</taxon>
        <taxon>Metazoa</taxon>
        <taxon>Chordata</taxon>
        <taxon>Craniata</taxon>
        <taxon>Vertebrata</taxon>
        <taxon>Euteleostomi</taxon>
        <taxon>Mammalia</taxon>
        <taxon>Eutheria</taxon>
        <taxon>Euarchontoglires</taxon>
        <taxon>Primates</taxon>
        <taxon>Haplorrhini</taxon>
        <taxon>Catarrhini</taxon>
        <taxon>Hominidae</taxon>
        <taxon>Homo</taxon>
    </lineage>
</organism>
<accession>Q14764</accession>
<accession>Q96BG4</accession>
<accession>Q9BPW6</accession>
<accession>Q9BQT1</accession>
<accession>Q9UBD1</accession>
<name>MVP_HUMAN</name>
<dbReference type="EMBL" id="X79882">
    <property type="protein sequence ID" value="CAA56256.2"/>
    <property type="molecule type" value="mRNA"/>
</dbReference>
<dbReference type="EMBL" id="BC015623">
    <property type="protein sequence ID" value="AAH15623.1"/>
    <property type="molecule type" value="mRNA"/>
</dbReference>
<dbReference type="EMBL" id="AJ238512">
    <property type="protein sequence ID" value="CAB55354.1"/>
    <property type="molecule type" value="Genomic_DNA"/>
</dbReference>
<dbReference type="EMBL" id="AJ238514">
    <property type="protein sequence ID" value="CAB55354.1"/>
    <property type="status" value="JOINED"/>
    <property type="molecule type" value="Genomic_DNA"/>
</dbReference>
<dbReference type="EMBL" id="AJ238516">
    <property type="protein sequence ID" value="CAB55354.1"/>
    <property type="status" value="JOINED"/>
    <property type="molecule type" value="Genomic_DNA"/>
</dbReference>
<dbReference type="EMBL" id="AJ238518">
    <property type="protein sequence ID" value="CAB55354.1"/>
    <property type="status" value="JOINED"/>
    <property type="molecule type" value="Genomic_DNA"/>
</dbReference>
<dbReference type="EMBL" id="AJ238519">
    <property type="protein sequence ID" value="CAB55355.1"/>
    <property type="molecule type" value="Genomic_DNA"/>
</dbReference>
<dbReference type="EMBL" id="AJ238514">
    <property type="protein sequence ID" value="CAB55355.1"/>
    <property type="status" value="JOINED"/>
    <property type="molecule type" value="Genomic_DNA"/>
</dbReference>
<dbReference type="EMBL" id="AJ238516">
    <property type="protein sequence ID" value="CAB55355.1"/>
    <property type="status" value="JOINED"/>
    <property type="molecule type" value="Genomic_DNA"/>
</dbReference>
<dbReference type="EMBL" id="AJ238518">
    <property type="protein sequence ID" value="CAB55355.1"/>
    <property type="status" value="JOINED"/>
    <property type="molecule type" value="Genomic_DNA"/>
</dbReference>
<dbReference type="EMBL" id="AJ291365">
    <property type="protein sequence ID" value="CAC35313.1"/>
    <property type="molecule type" value="Genomic_DNA"/>
</dbReference>
<dbReference type="EMBL" id="AJ291366">
    <property type="protein sequence ID" value="CAC35314.1"/>
    <property type="molecule type" value="mRNA"/>
</dbReference>
<dbReference type="EMBL" id="AJ291367">
    <property type="protein sequence ID" value="CAC35316.1"/>
    <property type="molecule type" value="mRNA"/>
</dbReference>
<dbReference type="CCDS" id="CCDS10656.1"/>
<dbReference type="PIR" id="S57723">
    <property type="entry name" value="S57723"/>
</dbReference>
<dbReference type="RefSeq" id="NP_001280133.1">
    <property type="nucleotide sequence ID" value="NM_001293204.1"/>
</dbReference>
<dbReference type="RefSeq" id="NP_001280134.1">
    <property type="nucleotide sequence ID" value="NM_001293205.1"/>
</dbReference>
<dbReference type="RefSeq" id="NP_005106.2">
    <property type="nucleotide sequence ID" value="NM_005115.4"/>
</dbReference>
<dbReference type="RefSeq" id="NP_059447.2">
    <property type="nucleotide sequence ID" value="NM_017458.3"/>
</dbReference>
<dbReference type="PDB" id="1Y7X">
    <property type="method" value="NMR"/>
    <property type="chains" value="A=113-221"/>
</dbReference>
<dbReference type="PDB" id="9BW5">
    <property type="method" value="EM"/>
    <property type="resolution" value="3.30 A"/>
    <property type="chains" value="A/B=1-893"/>
</dbReference>
<dbReference type="PDB" id="9BW6">
    <property type="method" value="EM"/>
    <property type="resolution" value="2.90 A"/>
    <property type="chains" value="A/C=1-893"/>
</dbReference>
<dbReference type="PDB" id="9BW7">
    <property type="method" value="EM"/>
    <property type="resolution" value="2.90 A"/>
    <property type="chains" value="A/C=1-893"/>
</dbReference>
<dbReference type="PDB" id="9MXH">
    <property type="method" value="EM"/>
    <property type="resolution" value="3.07 A"/>
    <property type="chains" value="A/B=1-893"/>
</dbReference>
<dbReference type="PDB" id="9MXV">
    <property type="method" value="EM"/>
    <property type="resolution" value="2.68 A"/>
    <property type="chains" value="A/B=1-893"/>
</dbReference>
<dbReference type="PDBsum" id="1Y7X"/>
<dbReference type="PDBsum" id="9BW5"/>
<dbReference type="PDBsum" id="9BW6"/>
<dbReference type="PDBsum" id="9BW7"/>
<dbReference type="PDBsum" id="9MXH"/>
<dbReference type="PDBsum" id="9MXV"/>
<dbReference type="EMDB" id="EMD-44953"/>
<dbReference type="EMDB" id="EMD-44954"/>
<dbReference type="EMDB" id="EMD-44955"/>
<dbReference type="EMDB" id="EMD-44957"/>
<dbReference type="EMDB" id="EMD-44959"/>
<dbReference type="EMDB" id="EMD-44960"/>
<dbReference type="SMR" id="Q14764"/>
<dbReference type="BioGRID" id="115286">
    <property type="interactions" value="179"/>
</dbReference>
<dbReference type="ComplexPortal" id="CPX-10181">
    <property type="entry name" value="Vault ribonucleoprotein complex"/>
</dbReference>
<dbReference type="FunCoup" id="Q14764">
    <property type="interactions" value="666"/>
</dbReference>
<dbReference type="IntAct" id="Q14764">
    <property type="interactions" value="82"/>
</dbReference>
<dbReference type="MINT" id="Q14764"/>
<dbReference type="STRING" id="9606.ENSP00000378760"/>
<dbReference type="TCDB" id="1.I.1.1.3">
    <property type="family name" value="the nuclear pore complex (npc) family"/>
</dbReference>
<dbReference type="GlyGen" id="Q14764">
    <property type="glycosylation" value="1 site, 1 O-linked glycan (1 site)"/>
</dbReference>
<dbReference type="iPTMnet" id="Q14764"/>
<dbReference type="MetOSite" id="Q14764"/>
<dbReference type="PhosphoSitePlus" id="Q14764"/>
<dbReference type="SwissPalm" id="Q14764"/>
<dbReference type="BioMuta" id="MVP"/>
<dbReference type="DMDM" id="21542417"/>
<dbReference type="OGP" id="Q14764"/>
<dbReference type="REPRODUCTION-2DPAGE" id="IPI00000105"/>
<dbReference type="CPTAC" id="CPTAC-95"/>
<dbReference type="CPTAC" id="CPTAC-96"/>
<dbReference type="jPOST" id="Q14764"/>
<dbReference type="MassIVE" id="Q14764"/>
<dbReference type="PaxDb" id="9606-ENSP00000378760"/>
<dbReference type="PeptideAtlas" id="Q14764"/>
<dbReference type="ProteomicsDB" id="60157"/>
<dbReference type="Pumba" id="Q14764"/>
<dbReference type="Antibodypedia" id="1032">
    <property type="antibodies" value="763 antibodies from 40 providers"/>
</dbReference>
<dbReference type="DNASU" id="9961"/>
<dbReference type="Ensembl" id="ENST00000357402.10">
    <property type="protein sequence ID" value="ENSP00000349977.5"/>
    <property type="gene ID" value="ENSG00000013364.19"/>
</dbReference>
<dbReference type="Ensembl" id="ENST00000395353.5">
    <property type="protein sequence ID" value="ENSP00000378760.1"/>
    <property type="gene ID" value="ENSG00000013364.19"/>
</dbReference>
<dbReference type="GeneID" id="9961"/>
<dbReference type="KEGG" id="hsa:9961"/>
<dbReference type="MANE-Select" id="ENST00000357402.10">
    <property type="protein sequence ID" value="ENSP00000349977.5"/>
    <property type="RefSeq nucleotide sequence ID" value="NM_005115.5"/>
    <property type="RefSeq protein sequence ID" value="NP_005106.2"/>
</dbReference>
<dbReference type="AGR" id="HGNC:7531"/>
<dbReference type="CTD" id="9961"/>
<dbReference type="DisGeNET" id="9961"/>
<dbReference type="GeneCards" id="MVP"/>
<dbReference type="HGNC" id="HGNC:7531">
    <property type="gene designation" value="MVP"/>
</dbReference>
<dbReference type="HPA" id="ENSG00000013364">
    <property type="expression patterns" value="Low tissue specificity"/>
</dbReference>
<dbReference type="MIM" id="605088">
    <property type="type" value="gene"/>
</dbReference>
<dbReference type="neXtProt" id="NX_Q14764"/>
<dbReference type="OpenTargets" id="ENSG00000013364"/>
<dbReference type="PharmGKB" id="PA31332"/>
<dbReference type="VEuPathDB" id="HostDB:ENSG00000013364"/>
<dbReference type="eggNOG" id="ENOG502QPP0">
    <property type="taxonomic scope" value="Eukaryota"/>
</dbReference>
<dbReference type="GeneTree" id="ENSGT00390000008969"/>
<dbReference type="HOGENOM" id="CLU_016171_0_0_1"/>
<dbReference type="InParanoid" id="Q14764"/>
<dbReference type="OMA" id="VTYRAPH"/>
<dbReference type="OrthoDB" id="6125719at2759"/>
<dbReference type="PAN-GO" id="Q14764">
    <property type="GO annotations" value="2 GO annotations based on evolutionary models"/>
</dbReference>
<dbReference type="PhylomeDB" id="Q14764"/>
<dbReference type="TreeFam" id="TF329353"/>
<dbReference type="PathwayCommons" id="Q14764"/>
<dbReference type="Reactome" id="R-HSA-6798695">
    <property type="pathway name" value="Neutrophil degranulation"/>
</dbReference>
<dbReference type="SignaLink" id="Q14764"/>
<dbReference type="BioGRID-ORCS" id="9961">
    <property type="hits" value="9 hits in 1155 CRISPR screens"/>
</dbReference>
<dbReference type="CD-CODE" id="D6A53B8E">
    <property type="entry name" value="Nuclear pore complex"/>
</dbReference>
<dbReference type="CD-CODE" id="FB4E32DD">
    <property type="entry name" value="Presynaptic clusters and postsynaptic densities"/>
</dbReference>
<dbReference type="ChiTaRS" id="MVP">
    <property type="organism name" value="human"/>
</dbReference>
<dbReference type="EvolutionaryTrace" id="Q14764"/>
<dbReference type="GeneWiki" id="Major_vault_protein"/>
<dbReference type="GenomeRNAi" id="9961"/>
<dbReference type="Pharos" id="Q14764">
    <property type="development level" value="Tbio"/>
</dbReference>
<dbReference type="PRO" id="PR:Q14764"/>
<dbReference type="Proteomes" id="UP000005640">
    <property type="component" value="Chromosome 16"/>
</dbReference>
<dbReference type="RNAct" id="Q14764">
    <property type="molecule type" value="protein"/>
</dbReference>
<dbReference type="Bgee" id="ENSG00000013364">
    <property type="expression patterns" value="Expressed in mucosa of transverse colon and 184 other cell types or tissues"/>
</dbReference>
<dbReference type="ExpressionAtlas" id="Q14764">
    <property type="expression patterns" value="baseline and differential"/>
</dbReference>
<dbReference type="GO" id="GO:0005737">
    <property type="term" value="C:cytoplasm"/>
    <property type="evidence" value="ECO:0000314"/>
    <property type="project" value="UniProtKB"/>
</dbReference>
<dbReference type="GO" id="GO:0005856">
    <property type="term" value="C:cytoskeleton"/>
    <property type="evidence" value="ECO:0000314"/>
    <property type="project" value="UniProtKB"/>
</dbReference>
<dbReference type="GO" id="GO:0005829">
    <property type="term" value="C:cytosol"/>
    <property type="evidence" value="ECO:0000314"/>
    <property type="project" value="HPA"/>
</dbReference>
<dbReference type="GO" id="GO:0070062">
    <property type="term" value="C:extracellular exosome"/>
    <property type="evidence" value="ECO:0007005"/>
    <property type="project" value="UniProtKB"/>
</dbReference>
<dbReference type="GO" id="GO:0005576">
    <property type="term" value="C:extracellular region"/>
    <property type="evidence" value="ECO:0000304"/>
    <property type="project" value="Reactome"/>
</dbReference>
<dbReference type="GO" id="GO:1904813">
    <property type="term" value="C:ficolin-1-rich granule lumen"/>
    <property type="evidence" value="ECO:0000304"/>
    <property type="project" value="Reactome"/>
</dbReference>
<dbReference type="GO" id="GO:0016020">
    <property type="term" value="C:membrane"/>
    <property type="evidence" value="ECO:0007005"/>
    <property type="project" value="UniProtKB"/>
</dbReference>
<dbReference type="GO" id="GO:0005643">
    <property type="term" value="C:nuclear pore"/>
    <property type="evidence" value="ECO:0007669"/>
    <property type="project" value="UniProtKB-SubCell"/>
</dbReference>
<dbReference type="GO" id="GO:0005634">
    <property type="term" value="C:nucleus"/>
    <property type="evidence" value="ECO:0000314"/>
    <property type="project" value="UniProtKB"/>
</dbReference>
<dbReference type="GO" id="GO:0048471">
    <property type="term" value="C:perinuclear region of cytoplasm"/>
    <property type="evidence" value="ECO:0000314"/>
    <property type="project" value="UniProtKB"/>
</dbReference>
<dbReference type="GO" id="GO:1990904">
    <property type="term" value="C:ribonucleoprotein complex"/>
    <property type="evidence" value="ECO:0007669"/>
    <property type="project" value="UniProtKB-KW"/>
</dbReference>
<dbReference type="GO" id="GO:0034774">
    <property type="term" value="C:secretory granule lumen"/>
    <property type="evidence" value="ECO:0000304"/>
    <property type="project" value="Reactome"/>
</dbReference>
<dbReference type="GO" id="GO:0042802">
    <property type="term" value="F:identical protein binding"/>
    <property type="evidence" value="ECO:0000353"/>
    <property type="project" value="IntAct"/>
</dbReference>
<dbReference type="GO" id="GO:0019901">
    <property type="term" value="F:protein kinase binding"/>
    <property type="evidence" value="ECO:0000353"/>
    <property type="project" value="UniProtKB"/>
</dbReference>
<dbReference type="GO" id="GO:0019903">
    <property type="term" value="F:protein phosphatase binding"/>
    <property type="evidence" value="ECO:0000314"/>
    <property type="project" value="UniProtKB"/>
</dbReference>
<dbReference type="GO" id="GO:0008283">
    <property type="term" value="P:cell population proliferation"/>
    <property type="evidence" value="ECO:0007669"/>
    <property type="project" value="Ensembl"/>
</dbReference>
<dbReference type="GO" id="GO:0038127">
    <property type="term" value="P:ERBB signaling pathway"/>
    <property type="evidence" value="ECO:0000314"/>
    <property type="project" value="UniProtKB"/>
</dbReference>
<dbReference type="GO" id="GO:0051028">
    <property type="term" value="P:mRNA transport"/>
    <property type="evidence" value="ECO:0007669"/>
    <property type="project" value="UniProtKB-KW"/>
</dbReference>
<dbReference type="GO" id="GO:0042059">
    <property type="term" value="P:negative regulation of epidermal growth factor receptor signaling pathway"/>
    <property type="evidence" value="ECO:0000314"/>
    <property type="project" value="UniProtKB"/>
</dbReference>
<dbReference type="GO" id="GO:0031953">
    <property type="term" value="P:negative regulation of protein autophosphorylation"/>
    <property type="evidence" value="ECO:0000314"/>
    <property type="project" value="UniProtKB"/>
</dbReference>
<dbReference type="GO" id="GO:0061099">
    <property type="term" value="P:negative regulation of protein tyrosine kinase activity"/>
    <property type="evidence" value="ECO:0000314"/>
    <property type="project" value="UniProtKB"/>
</dbReference>
<dbReference type="GO" id="GO:0072376">
    <property type="term" value="P:protein activation cascade"/>
    <property type="evidence" value="ECO:0007669"/>
    <property type="project" value="Ensembl"/>
</dbReference>
<dbReference type="GO" id="GO:0015031">
    <property type="term" value="P:protein transport"/>
    <property type="evidence" value="ECO:0007669"/>
    <property type="project" value="UniProtKB-KW"/>
</dbReference>
<dbReference type="CDD" id="cd08825">
    <property type="entry name" value="MVP_shoulder"/>
    <property type="match status" value="1"/>
</dbReference>
<dbReference type="FunFam" id="2.30.30.550:FF:000002">
    <property type="entry name" value="Major vault protein"/>
    <property type="match status" value="1"/>
</dbReference>
<dbReference type="FunFam" id="2.30.30.560:FF:000002">
    <property type="entry name" value="Major vault protein-alpha"/>
    <property type="match status" value="1"/>
</dbReference>
<dbReference type="FunFam" id="2.30.30.570:FF:000002">
    <property type="entry name" value="Major vault protein-alpha"/>
    <property type="match status" value="1"/>
</dbReference>
<dbReference type="FunFam" id="2.30.30.550:FF:000001">
    <property type="entry name" value="major vault protein-like"/>
    <property type="match status" value="3"/>
</dbReference>
<dbReference type="FunFam" id="2.30.30.560:FF:000001">
    <property type="entry name" value="major vault protein-like"/>
    <property type="match status" value="1"/>
</dbReference>
<dbReference type="FunFam" id="2.30.30.570:FF:000001">
    <property type="entry name" value="major vault protein-like"/>
    <property type="match status" value="1"/>
</dbReference>
<dbReference type="FunFam" id="2.30.30.620:FF:000001">
    <property type="entry name" value="major vault protein-like"/>
    <property type="match status" value="1"/>
</dbReference>
<dbReference type="FunFam" id="3.30.479.30:FF:000010">
    <property type="entry name" value="major vault protein-like"/>
    <property type="match status" value="1"/>
</dbReference>
<dbReference type="Gene3D" id="2.30.30.560">
    <property type="match status" value="2"/>
</dbReference>
<dbReference type="Gene3D" id="2.30.30.570">
    <property type="match status" value="2"/>
</dbReference>
<dbReference type="Gene3D" id="2.30.30.620">
    <property type="match status" value="1"/>
</dbReference>
<dbReference type="Gene3D" id="6.10.250.720">
    <property type="match status" value="1"/>
</dbReference>
<dbReference type="Gene3D" id="6.20.380.10">
    <property type="match status" value="1"/>
</dbReference>
<dbReference type="Gene3D" id="3.30.479.30">
    <property type="entry name" value="Band 7 domain"/>
    <property type="match status" value="1"/>
</dbReference>
<dbReference type="Gene3D" id="2.30.30.550">
    <property type="entry name" value="Major Vault Protein repeat"/>
    <property type="match status" value="4"/>
</dbReference>
<dbReference type="InterPro" id="IPR036013">
    <property type="entry name" value="Band_7/SPFH_dom_sf"/>
</dbReference>
<dbReference type="InterPro" id="IPR039059">
    <property type="entry name" value="MVP"/>
</dbReference>
<dbReference type="InterPro" id="IPR041139">
    <property type="entry name" value="MVP_rep_dom"/>
</dbReference>
<dbReference type="InterPro" id="IPR043023">
    <property type="entry name" value="MVP_rep_sf"/>
</dbReference>
<dbReference type="InterPro" id="IPR021870">
    <property type="entry name" value="MVP_shoulder"/>
</dbReference>
<dbReference type="InterPro" id="IPR041134">
    <property type="entry name" value="Vault_2"/>
</dbReference>
<dbReference type="InterPro" id="IPR043179">
    <property type="entry name" value="Vault_2_sf"/>
</dbReference>
<dbReference type="InterPro" id="IPR040989">
    <property type="entry name" value="Vault_3"/>
</dbReference>
<dbReference type="InterPro" id="IPR041136">
    <property type="entry name" value="Vault_4"/>
</dbReference>
<dbReference type="InterPro" id="IPR002499">
    <property type="entry name" value="Vault_N"/>
</dbReference>
<dbReference type="PANTHER" id="PTHR14165">
    <property type="entry name" value="MAJOR VAULT PROTEIN"/>
    <property type="match status" value="1"/>
</dbReference>
<dbReference type="PANTHER" id="PTHR14165:SF3">
    <property type="entry name" value="MAJOR VAULT PROTEIN"/>
    <property type="match status" value="1"/>
</dbReference>
<dbReference type="Pfam" id="PF11978">
    <property type="entry name" value="MVP_shoulder"/>
    <property type="match status" value="1"/>
</dbReference>
<dbReference type="Pfam" id="PF01505">
    <property type="entry name" value="Vault"/>
    <property type="match status" value="4"/>
</dbReference>
<dbReference type="Pfam" id="PF17794">
    <property type="entry name" value="Vault_2"/>
    <property type="match status" value="2"/>
</dbReference>
<dbReference type="Pfam" id="PF17795">
    <property type="entry name" value="Vault_3"/>
    <property type="match status" value="1"/>
</dbReference>
<dbReference type="Pfam" id="PF17796">
    <property type="entry name" value="Vault_4"/>
    <property type="match status" value="1"/>
</dbReference>
<dbReference type="PROSITE" id="PS51224">
    <property type="entry name" value="MVP"/>
    <property type="match status" value="8"/>
</dbReference>
<feature type="initiator methionine" description="Removed" evidence="10 11 12">
    <location>
        <position position="1"/>
    </location>
</feature>
<feature type="chain" id="PRO_0000158980" description="Major vault protein">
    <location>
        <begin position="2"/>
        <end position="893"/>
    </location>
</feature>
<feature type="repeat" description="MVP 1">
    <location>
        <begin position="2"/>
        <end position="56"/>
    </location>
</feature>
<feature type="repeat" description="MVP 2">
    <location>
        <begin position="57"/>
        <end position="111"/>
    </location>
</feature>
<feature type="repeat" description="MVP 3">
    <location>
        <begin position="112"/>
        <end position="164"/>
    </location>
</feature>
<feature type="repeat" description="MVP 4">
    <location>
        <begin position="165"/>
        <end position="217"/>
    </location>
</feature>
<feature type="repeat" description="MVP 5">
    <location>
        <begin position="218"/>
        <end position="272"/>
    </location>
</feature>
<feature type="repeat" description="MVP 6">
    <location>
        <begin position="273"/>
        <end position="323"/>
    </location>
</feature>
<feature type="repeat" description="MVP 7">
    <location>
        <begin position="324"/>
        <end position="379"/>
    </location>
</feature>
<feature type="repeat" description="MVP 8">
    <location>
        <begin position="380"/>
        <end position="457"/>
    </location>
</feature>
<feature type="repeat" description="MVP 9">
    <location>
        <begin position="458"/>
        <end position="520"/>
    </location>
</feature>
<feature type="region of interest" description="Disordered" evidence="1">
    <location>
        <begin position="856"/>
        <end position="893"/>
    </location>
</feature>
<feature type="modified residue" description="N-acetylalanine" evidence="10 11 12">
    <location>
        <position position="2"/>
    </location>
</feature>
<feature type="modified residue" description="Phosphoserine" evidence="13">
    <location>
        <position position="445"/>
    </location>
</feature>
<feature type="cross-link" description="Glycyl lysine isopeptide (Lys-Gly) (interchain with G-Cter in SUMO2)" evidence="14 15">
    <location>
        <position position="444"/>
    </location>
</feature>
<feature type="cross-link" description="Glycyl lysine isopeptide (Lys-Gly) (interchain with G-Cter in SUMO2)" evidence="15">
    <location>
        <position position="704"/>
    </location>
</feature>
<feature type="sequence variant" id="VAR_079710" evidence="9">
    <original>D</original>
    <variation>E</variation>
    <location>
        <position position="87"/>
    </location>
</feature>
<feature type="sequence variant" id="VAR_050179" description="In dbSNP:rs35916172.">
    <original>V</original>
    <variation>I</variation>
    <location>
        <position position="635"/>
    </location>
</feature>
<feature type="sequence variant" id="VAR_050180" description="In dbSNP:rs3764944.">
    <original>R</original>
    <variation>Q</variation>
    <location>
        <position position="651"/>
    </location>
</feature>
<feature type="strand" evidence="16">
    <location>
        <begin position="120"/>
        <end position="125"/>
    </location>
</feature>
<feature type="strand" evidence="16">
    <location>
        <begin position="137"/>
        <end position="139"/>
    </location>
</feature>
<feature type="strand" evidence="16">
    <location>
        <begin position="141"/>
        <end position="147"/>
    </location>
</feature>
<feature type="helix" evidence="16">
    <location>
        <begin position="148"/>
        <end position="150"/>
    </location>
</feature>
<feature type="strand" evidence="16">
    <location>
        <begin position="157"/>
        <end position="163"/>
    </location>
</feature>
<feature type="strand" evidence="16">
    <location>
        <begin position="170"/>
        <end position="181"/>
    </location>
</feature>
<feature type="strand" evidence="16">
    <location>
        <begin position="185"/>
        <end position="187"/>
    </location>
</feature>
<feature type="strand" evidence="16">
    <location>
        <begin position="195"/>
        <end position="198"/>
    </location>
</feature>
<feature type="strand" evidence="16">
    <location>
        <begin position="208"/>
        <end position="217"/>
    </location>
</feature>
<evidence type="ECO:0000256" key="1">
    <source>
        <dbReference type="SAM" id="MobiDB-lite"/>
    </source>
</evidence>
<evidence type="ECO:0000269" key="2">
    <source>
    </source>
</evidence>
<evidence type="ECO:0000269" key="3">
    <source>
    </source>
</evidence>
<evidence type="ECO:0000269" key="4">
    <source>
    </source>
</evidence>
<evidence type="ECO:0000269" key="5">
    <source>
    </source>
</evidence>
<evidence type="ECO:0000269" key="6">
    <source>
    </source>
</evidence>
<evidence type="ECO:0000269" key="7">
    <source>
    </source>
</evidence>
<evidence type="ECO:0000269" key="8">
    <source>
    </source>
</evidence>
<evidence type="ECO:0000269" key="9">
    <source>
    </source>
</evidence>
<evidence type="ECO:0000269" key="10">
    <source ref="6"/>
</evidence>
<evidence type="ECO:0007744" key="11">
    <source>
    </source>
</evidence>
<evidence type="ECO:0007744" key="12">
    <source>
    </source>
</evidence>
<evidence type="ECO:0007744" key="13">
    <source>
    </source>
</evidence>
<evidence type="ECO:0007744" key="14">
    <source>
    </source>
</evidence>
<evidence type="ECO:0007744" key="15">
    <source>
    </source>
</evidence>
<evidence type="ECO:0007829" key="16">
    <source>
        <dbReference type="PDB" id="1Y7X"/>
    </source>
</evidence>
<proteinExistence type="evidence at protein level"/>
<keyword id="KW-0002">3D-structure</keyword>
<keyword id="KW-0007">Acetylation</keyword>
<keyword id="KW-0963">Cytoplasm</keyword>
<keyword id="KW-0903">Direct protein sequencing</keyword>
<keyword id="KW-1017">Isopeptide bond</keyword>
<keyword id="KW-0509">mRNA transport</keyword>
<keyword id="KW-0906">Nuclear pore complex</keyword>
<keyword id="KW-0539">Nucleus</keyword>
<keyword id="KW-0597">Phosphoprotein</keyword>
<keyword id="KW-0653">Protein transport</keyword>
<keyword id="KW-1267">Proteomics identification</keyword>
<keyword id="KW-1185">Reference proteome</keyword>
<keyword id="KW-0677">Repeat</keyword>
<keyword id="KW-0687">Ribonucleoprotein</keyword>
<keyword id="KW-0811">Translocation</keyword>
<keyword id="KW-0813">Transport</keyword>
<keyword id="KW-0832">Ubl conjugation</keyword>
<sequence>MATEEFIIRIPPYHYIHVLDQNSNVSRVEVGPKTYIRQDNERVLFAPMRMVTVPPRHYCTVANPVSRDAQGLVLFDVTGQVRLRHADLEIRLAQDPFPLYPGEVLEKDITPLQVVLPNTALHLKALLDFEDKDGDKVVAGDEWLFEGPGTYIPRKEVEVVEIIQATIIRQNQALRLRARKECWDRDGKERVTGEEWLVTTVGAYLPAVFEEVLDLVDAVILTEKTALHLRARRNFRDFRGVSRRTGEEWLVTVQDTEAHVPDVHEEVLGVVPITTLGPHNYCVILDPVGPDGKNQLGQKRVVKGEKSFFLQPGEQLEQGIQDVYVLSEQQGLLLRALQPLEEGEDEEKVSHQAGDHWLIRGPLEYVPSAKVEVVEERQAIPLDENEGIYVQDVKTGKVRAVIGSTYMLTQDEVLWEKELPPGVEELLNKGQDPLADRGEKDTAKSLQPLAPRNKTRVVSYRVPHNAAVQVYDYREKRARVVFGPELVSLGPEEQFTVLSLSAGRPKRPHARRALCLLLGPDFFTDVITIETADHARLQLQLAYNWHFEVNDRKDPQETAKLFSVPDFVGDACKAIASRVRGAVASVTFDDFHKNSARIIRTAVFGFETSEAKGPDGMALPRPRDQAVFPQNGLVVSSVDVQSVEPVDQRTRDALQRSVQLAIEITTNSQEAAAKHEAQRLEQEARGRLERQKILDQSEAEKARKELLELEALSMAVESTGTAKAEAESRAEAARIEGEGSVLQAKLKAQALAIETEAELQRVQKVRELELVYARAQLELEVSKAQQLAEVEVKKFKQMTEAIGPSTIRDLAVAGPEMQVKLLQSLGLKSTLITDGSTPINLFNTAFGLLGMGPEGQPLGRRVASGPSPGEGISPQSAQAPQAPGDNHVVPVLR</sequence>
<protein>
    <recommendedName>
        <fullName>Major vault protein</fullName>
        <shortName>MVP</shortName>
    </recommendedName>
    <alternativeName>
        <fullName>Lung resistance-related protein</fullName>
    </alternativeName>
</protein>
<comment type="function">
    <text evidence="3 5 6">Required for normal vault structure. Vaults are multi-subunit structures that may act as scaffolds for proteins involved in signal transduction. Vaults may also play a role in nucleo-cytoplasmic transport. Down-regulates IFNG-mediated STAT1 signaling and subsequent activation of JAK. Down-regulates SRC activity and signaling through MAP kinases.</text>
</comment>
<comment type="subunit">
    <text evidence="2 3 4 6 7 8">The vault ribonucleoprotein particle is a huge (400 A x 670 A) cage structure of 12.9 MDa. It consists of a dimer of half-vaults, with each half-vault comprising 39 identical major vault protein (MVP) chains, PARP4 and one or more vault RNAs (vRNAs). Interacts with TEP1. Interacts with PTEN and activated MAPK1. The phosphorylated protein interacts with the SH2 domains of PTPN11 and SRC. Interacts with APEX1. May interact with ZNF540.</text>
</comment>
<comment type="interaction">
    <interactant intactId="EBI-2816254">
        <id>Q14764</id>
    </interactant>
    <interactant intactId="EBI-740376">
        <id>Q86UW9</id>
        <label>DTX2</label>
    </interactant>
    <organismsDiffer>false</organismsDiffer>
    <experiments>3</experiments>
</comment>
<comment type="interaction">
    <interactant intactId="EBI-2816254">
        <id>Q14764</id>
    </interactant>
    <interactant intactId="EBI-10242151">
        <id>Q53EP0-3</id>
        <label>FNDC3B</label>
    </interactant>
    <organismsDiffer>false</organismsDiffer>
    <experiments>3</experiments>
</comment>
<comment type="interaction">
    <interactant intactId="EBI-2816254">
        <id>Q14764</id>
    </interactant>
    <interactant intactId="EBI-2816254">
        <id>Q14764</id>
        <label>MVP</label>
    </interactant>
    <organismsDiffer>false</organismsDiffer>
    <experiments>7</experiments>
</comment>
<comment type="interaction">
    <interactant intactId="EBI-2816254">
        <id>Q14764</id>
    </interactant>
    <interactant intactId="EBI-11742836">
        <id>Q16656-4</id>
        <label>NRF1</label>
    </interactant>
    <organismsDiffer>false</organismsDiffer>
    <experiments>3</experiments>
</comment>
<comment type="interaction">
    <interactant intactId="EBI-2816254">
        <id>Q14764</id>
    </interactant>
    <interactant intactId="EBI-741158">
        <id>Q96HA8</id>
        <label>NTAQ1</label>
    </interactant>
    <organismsDiffer>false</organismsDiffer>
    <experiments>3</experiments>
</comment>
<comment type="interaction">
    <interactant intactId="EBI-2816254">
        <id>Q14764</id>
    </interactant>
    <interactant intactId="EBI-74615">
        <id>Q9H0E2</id>
        <label>TOLLIP</label>
    </interactant>
    <organismsDiffer>false</organismsDiffer>
    <experiments>3</experiments>
</comment>
<comment type="interaction">
    <interactant intactId="EBI-2816254">
        <id>Q14764</id>
    </interactant>
    <interactant intactId="EBI-12867288">
        <id>Q8WUN7</id>
        <label>UBTD2</label>
    </interactant>
    <organismsDiffer>false</organismsDiffer>
    <experiments>3</experiments>
</comment>
<comment type="subcellular location">
    <subcellularLocation>
        <location evidence="3 6">Cytoplasm</location>
    </subcellularLocation>
    <subcellularLocation>
        <location evidence="6">Nucleus</location>
        <location evidence="6">Nuclear pore complex</location>
    </subcellularLocation>
    <subcellularLocation>
        <location evidence="6">Cytoplasm</location>
        <location evidence="6">Perinuclear region</location>
    </subcellularLocation>
    <text>5% found in the nuclear pore complex (PubMed:15133037). Translocates from the nucleus to the cytoplasm upon EGF treatment (PubMed:16441665).</text>
</comment>
<comment type="tissue specificity">
    <text>Present in most normal tissues. Higher expression observed in epithelial cells with secretory and excretory functions, as well as in cells chronically exposed to xenobiotics, such as bronchial cells and cells lining the intestine. Overexpressed in many multidrug-resistant cancer cells.</text>
</comment>
<comment type="induction">
    <text evidence="5">Up-regulated by IFNG/IFN-gamma.</text>
</comment>
<comment type="domain">
    <text>MVP 3 mediates interaction with PTEN.</text>
</comment>
<comment type="domain">
    <text>MVP 4 mediates interaction with PARP4.</text>
</comment>
<comment type="PTM">
    <text evidence="3">Phosphorylated on Tyr residues after EGF stimulation.</text>
</comment>
<comment type="PTM">
    <text>Dephosphorylated by PTPN11.</text>
</comment>
<comment type="online information" name="Atlas of Genetics and Cytogenetics in Oncology and Haematology">
    <link uri="https://atlasgeneticsoncology.org/gene/120/LRP"/>
</comment>